<organism>
    <name type="scientific">Bos taurus</name>
    <name type="common">Bovine</name>
    <dbReference type="NCBI Taxonomy" id="9913"/>
    <lineage>
        <taxon>Eukaryota</taxon>
        <taxon>Metazoa</taxon>
        <taxon>Chordata</taxon>
        <taxon>Craniata</taxon>
        <taxon>Vertebrata</taxon>
        <taxon>Euteleostomi</taxon>
        <taxon>Mammalia</taxon>
        <taxon>Eutheria</taxon>
        <taxon>Laurasiatheria</taxon>
        <taxon>Artiodactyla</taxon>
        <taxon>Ruminantia</taxon>
        <taxon>Pecora</taxon>
        <taxon>Bovidae</taxon>
        <taxon>Bovinae</taxon>
        <taxon>Bos</taxon>
    </lineage>
</organism>
<comment type="function">
    <text>May be involved in transcriptional regulation.</text>
</comment>
<comment type="subcellular location">
    <subcellularLocation>
        <location evidence="2">Nucleus</location>
    </subcellularLocation>
</comment>
<comment type="similarity">
    <text evidence="2">Belongs to the krueppel C2H2-type zinc-finger protein family.</text>
</comment>
<accession>Q3SYV7</accession>
<keyword id="KW-0238">DNA-binding</keyword>
<keyword id="KW-0479">Metal-binding</keyword>
<keyword id="KW-0539">Nucleus</keyword>
<keyword id="KW-1185">Reference proteome</keyword>
<keyword id="KW-0677">Repeat</keyword>
<keyword id="KW-0804">Transcription</keyword>
<keyword id="KW-0805">Transcription regulation</keyword>
<keyword id="KW-0862">Zinc</keyword>
<keyword id="KW-0863">Zinc-finger</keyword>
<protein>
    <recommendedName>
        <fullName>Zinc finger protein 345</fullName>
    </recommendedName>
</protein>
<dbReference type="EMBL" id="BC103362">
    <property type="protein sequence ID" value="AAI03363.1"/>
    <property type="molecule type" value="mRNA"/>
</dbReference>
<dbReference type="RefSeq" id="NP_001030404.1">
    <property type="nucleotide sequence ID" value="NM_001035327.1"/>
</dbReference>
<dbReference type="RefSeq" id="XP_059732700.1">
    <property type="nucleotide sequence ID" value="XM_059876717.1"/>
</dbReference>
<dbReference type="SMR" id="Q3SYV7"/>
<dbReference type="STRING" id="9913.ENSBTAP00000026567"/>
<dbReference type="Ensembl" id="ENSBTAT00000026567.5">
    <property type="protein sequence ID" value="ENSBTAP00000026567.3"/>
    <property type="gene ID" value="ENSBTAG00000008902.6"/>
</dbReference>
<dbReference type="Ensembl" id="ENSBTAT00000091854.1">
    <property type="protein sequence ID" value="ENSBTAP00000083436.1"/>
    <property type="gene ID" value="ENSBTAG00000008902.6"/>
</dbReference>
<dbReference type="Ensembl" id="ENSBTAT00000095615.1">
    <property type="protein sequence ID" value="ENSBTAP00000075326.1"/>
    <property type="gene ID" value="ENSBTAG00000008902.6"/>
</dbReference>
<dbReference type="Ensembl" id="ENSBTAT00000113288.1">
    <property type="protein sequence ID" value="ENSBTAP00000092476.1"/>
    <property type="gene ID" value="ENSBTAG00000008902.6"/>
</dbReference>
<dbReference type="Ensembl" id="ENSBTAT00000135826.1">
    <property type="protein sequence ID" value="ENSBTAP00000099787.1"/>
    <property type="gene ID" value="ENSBTAG00000008902.6"/>
</dbReference>
<dbReference type="GeneID" id="518207"/>
<dbReference type="KEGG" id="bta:518207"/>
<dbReference type="CTD" id="25850"/>
<dbReference type="VEuPathDB" id="HostDB:ENSBTAG00000008902"/>
<dbReference type="eggNOG" id="KOG1721">
    <property type="taxonomic scope" value="Eukaryota"/>
</dbReference>
<dbReference type="GeneTree" id="ENSGT00940000163308"/>
<dbReference type="HOGENOM" id="CLU_002678_44_5_1"/>
<dbReference type="InParanoid" id="Q3SYV7"/>
<dbReference type="OMA" id="HRHFSEM"/>
<dbReference type="OrthoDB" id="6591996at2759"/>
<dbReference type="Reactome" id="R-BTA-212436">
    <property type="pathway name" value="Generic Transcription Pathway"/>
</dbReference>
<dbReference type="Proteomes" id="UP000009136">
    <property type="component" value="Chromosome 18"/>
</dbReference>
<dbReference type="Bgee" id="ENSBTAG00000008902">
    <property type="expression patterns" value="Expressed in oocyte and 102 other cell types or tissues"/>
</dbReference>
<dbReference type="GO" id="GO:0005634">
    <property type="term" value="C:nucleus"/>
    <property type="evidence" value="ECO:0007669"/>
    <property type="project" value="UniProtKB-SubCell"/>
</dbReference>
<dbReference type="GO" id="GO:0003700">
    <property type="term" value="F:DNA-binding transcription factor activity"/>
    <property type="evidence" value="ECO:0000318"/>
    <property type="project" value="GO_Central"/>
</dbReference>
<dbReference type="GO" id="GO:0000978">
    <property type="term" value="F:RNA polymerase II cis-regulatory region sequence-specific DNA binding"/>
    <property type="evidence" value="ECO:0000318"/>
    <property type="project" value="GO_Central"/>
</dbReference>
<dbReference type="GO" id="GO:0008270">
    <property type="term" value="F:zinc ion binding"/>
    <property type="evidence" value="ECO:0007669"/>
    <property type="project" value="UniProtKB-KW"/>
</dbReference>
<dbReference type="GO" id="GO:0006357">
    <property type="term" value="P:regulation of transcription by RNA polymerase II"/>
    <property type="evidence" value="ECO:0000318"/>
    <property type="project" value="GO_Central"/>
</dbReference>
<dbReference type="FunFam" id="3.30.160.60:FF:004935">
    <property type="match status" value="1"/>
</dbReference>
<dbReference type="FunFam" id="3.30.160.60:FF:000800">
    <property type="entry name" value="zinc finger protein 181 isoform X2"/>
    <property type="match status" value="1"/>
</dbReference>
<dbReference type="FunFam" id="3.30.160.60:FF:001100">
    <property type="entry name" value="Zinc finger protein 184"/>
    <property type="match status" value="1"/>
</dbReference>
<dbReference type="FunFam" id="3.30.160.60:FF:000295">
    <property type="entry name" value="zinc finger protein 19"/>
    <property type="match status" value="1"/>
</dbReference>
<dbReference type="FunFam" id="3.30.160.60:FF:002278">
    <property type="entry name" value="Zinc finger protein 320"/>
    <property type="match status" value="1"/>
</dbReference>
<dbReference type="FunFam" id="3.30.160.60:FF:002343">
    <property type="entry name" value="Zinc finger protein 33A"/>
    <property type="match status" value="1"/>
</dbReference>
<dbReference type="FunFam" id="3.30.160.60:FF:000690">
    <property type="entry name" value="Zinc finger protein 354C"/>
    <property type="match status" value="1"/>
</dbReference>
<dbReference type="FunFam" id="3.30.160.60:FF:000016">
    <property type="entry name" value="zinc finger protein 37 homolog"/>
    <property type="match status" value="1"/>
</dbReference>
<dbReference type="FunFam" id="3.30.160.60:FF:001498">
    <property type="entry name" value="Zinc finger protein 404"/>
    <property type="match status" value="2"/>
</dbReference>
<dbReference type="FunFam" id="3.30.160.60:FF:002254">
    <property type="entry name" value="Zinc finger protein 540"/>
    <property type="match status" value="5"/>
</dbReference>
<dbReference type="FunFam" id="3.30.160.60:FF:000737">
    <property type="entry name" value="Zinc finger protein 565"/>
    <property type="match status" value="1"/>
</dbReference>
<dbReference type="Gene3D" id="3.30.160.60">
    <property type="entry name" value="Classic Zinc Finger"/>
    <property type="match status" value="15"/>
</dbReference>
<dbReference type="InterPro" id="IPR050331">
    <property type="entry name" value="Zinc_finger"/>
</dbReference>
<dbReference type="InterPro" id="IPR036236">
    <property type="entry name" value="Znf_C2H2_sf"/>
</dbReference>
<dbReference type="InterPro" id="IPR013087">
    <property type="entry name" value="Znf_C2H2_type"/>
</dbReference>
<dbReference type="PANTHER" id="PTHR16515">
    <property type="entry name" value="PR DOMAIN ZINC FINGER PROTEIN"/>
    <property type="match status" value="1"/>
</dbReference>
<dbReference type="PANTHER" id="PTHR16515:SF51">
    <property type="entry name" value="ZINC FINGER PROTEIN 833-RELATED"/>
    <property type="match status" value="1"/>
</dbReference>
<dbReference type="Pfam" id="PF00096">
    <property type="entry name" value="zf-C2H2"/>
    <property type="match status" value="12"/>
</dbReference>
<dbReference type="Pfam" id="PF13465">
    <property type="entry name" value="zf-H2C2_2"/>
    <property type="match status" value="1"/>
</dbReference>
<dbReference type="SMART" id="SM00355">
    <property type="entry name" value="ZnF_C2H2"/>
    <property type="match status" value="15"/>
</dbReference>
<dbReference type="SUPFAM" id="SSF57667">
    <property type="entry name" value="beta-beta-alpha zinc fingers"/>
    <property type="match status" value="8"/>
</dbReference>
<dbReference type="PROSITE" id="PS00028">
    <property type="entry name" value="ZINC_FINGER_C2H2_1"/>
    <property type="match status" value="15"/>
</dbReference>
<dbReference type="PROSITE" id="PS50157">
    <property type="entry name" value="ZINC_FINGER_C2H2_2"/>
    <property type="match status" value="15"/>
</dbReference>
<reference key="1">
    <citation type="submission" date="2005-08" db="EMBL/GenBank/DDBJ databases">
        <authorList>
            <consortium name="NIH - Mammalian Gene Collection (MGC) project"/>
        </authorList>
    </citation>
    <scope>NUCLEOTIDE SEQUENCE [LARGE SCALE MRNA]</scope>
    <source>
        <strain>Crossbred X Angus</strain>
        <tissue>Ileum</tissue>
    </source>
</reference>
<name>ZN345_BOVIN</name>
<feature type="chain" id="PRO_0000244601" description="Zinc finger protein 345">
    <location>
        <begin position="1"/>
        <end position="487"/>
    </location>
</feature>
<feature type="zinc finger region" description="C2H2-type 1" evidence="1">
    <location>
        <begin position="62"/>
        <end position="84"/>
    </location>
</feature>
<feature type="zinc finger region" description="C2H2-type 2" evidence="1">
    <location>
        <begin position="90"/>
        <end position="112"/>
    </location>
</feature>
<feature type="zinc finger region" description="C2H2-type 3" evidence="1">
    <location>
        <begin position="118"/>
        <end position="140"/>
    </location>
</feature>
<feature type="zinc finger region" description="C2H2-type 4" evidence="1">
    <location>
        <begin position="146"/>
        <end position="168"/>
    </location>
</feature>
<feature type="zinc finger region" description="C2H2-type 5" evidence="1">
    <location>
        <begin position="174"/>
        <end position="196"/>
    </location>
</feature>
<feature type="zinc finger region" description="C2H2-type 6" evidence="1">
    <location>
        <begin position="202"/>
        <end position="224"/>
    </location>
</feature>
<feature type="zinc finger region" description="C2H2-type 7" evidence="1">
    <location>
        <begin position="230"/>
        <end position="252"/>
    </location>
</feature>
<feature type="zinc finger region" description="C2H2-type 8" evidence="1">
    <location>
        <begin position="258"/>
        <end position="280"/>
    </location>
</feature>
<feature type="zinc finger region" description="C2H2-type 9" evidence="1">
    <location>
        <begin position="286"/>
        <end position="308"/>
    </location>
</feature>
<feature type="zinc finger region" description="C2H2-type 10" evidence="1">
    <location>
        <begin position="314"/>
        <end position="336"/>
    </location>
</feature>
<feature type="zinc finger region" description="C2H2-type 11" evidence="1">
    <location>
        <begin position="342"/>
        <end position="364"/>
    </location>
</feature>
<feature type="zinc finger region" description="C2H2-type 12" evidence="1">
    <location>
        <begin position="370"/>
        <end position="392"/>
    </location>
</feature>
<feature type="zinc finger region" description="C2H2-type 13" evidence="1">
    <location>
        <begin position="398"/>
        <end position="420"/>
    </location>
</feature>
<feature type="zinc finger region" description="C2H2-type 14" evidence="1">
    <location>
        <begin position="426"/>
        <end position="448"/>
    </location>
</feature>
<feature type="zinc finger region" description="C2H2-type 15" evidence="1">
    <location>
        <begin position="454"/>
        <end position="476"/>
    </location>
</feature>
<proteinExistence type="evidence at transcript level"/>
<evidence type="ECO:0000255" key="1">
    <source>
        <dbReference type="PROSITE-ProRule" id="PRU00042"/>
    </source>
</evidence>
<evidence type="ECO:0000305" key="2"/>
<sequence length="487" mass="55270">MERLIKNSIAYSRFRGDWECKSQFERKQESQEGHLSQMIFTPEDMPTFNTQHQRIHTDEKLLECKECGKDFSFVSVLIRHQRIHTGEKPYECKECGKAFGSGANLAYHQRIHTGEKPYECNECGKAFGSGSNLTHHQRIHTGEKPYECKECGKAFSFGSGLIRHQIIHSGEKPYECKVCGKSFSFESALTRHHRIHTGEKPYECKDCGKAFGSGSNLTQHRRVHTGEKPYECKGCGMAFSSGSALTRHQRIHTGEKPYICNECGKAFSFGSALTRHQRIHTGEKPYVCKECGKAFNSGSDLTQHQRIHTGEKPYECKECEKAFRSGSKLIQHQRMHTGEKPYECKECGKAFSSGSDLTQHQRIHTGEKPYECKECGKAFASGSKLIQHQLIHTGEKPYECRECRKSFSSGSALNRHQRIHTGQKPYECKECEKTFGTGSTLTQHQRMHTAEKLYECKACGKALGRGSEIQQHKKNHAGEKLCELETP</sequence>
<gene>
    <name type="primary">ZNF345</name>
</gene>